<accession>Q5N569</accession>
<organism>
    <name type="scientific">Synechococcus sp. (strain ATCC 27144 / PCC 6301 / SAUG 1402/1)</name>
    <name type="common">Anacystis nidulans</name>
    <dbReference type="NCBI Taxonomy" id="269084"/>
    <lineage>
        <taxon>Bacteria</taxon>
        <taxon>Bacillati</taxon>
        <taxon>Cyanobacteriota</taxon>
        <taxon>Cyanophyceae</taxon>
        <taxon>Synechococcales</taxon>
        <taxon>Synechococcaceae</taxon>
        <taxon>Synechococcus</taxon>
    </lineage>
</organism>
<feature type="chain" id="PRO_1000019990" description="Probable cytosol aminopeptidase">
    <location>
        <begin position="1"/>
        <end position="486"/>
    </location>
</feature>
<feature type="active site" evidence="1">
    <location>
        <position position="268"/>
    </location>
</feature>
<feature type="active site" evidence="1">
    <location>
        <position position="343"/>
    </location>
</feature>
<feature type="binding site" evidence="1">
    <location>
        <position position="256"/>
    </location>
    <ligand>
        <name>Mn(2+)</name>
        <dbReference type="ChEBI" id="CHEBI:29035"/>
        <label>2</label>
    </ligand>
</feature>
<feature type="binding site" evidence="1">
    <location>
        <position position="261"/>
    </location>
    <ligand>
        <name>Mn(2+)</name>
        <dbReference type="ChEBI" id="CHEBI:29035"/>
        <label>1</label>
    </ligand>
</feature>
<feature type="binding site" evidence="1">
    <location>
        <position position="261"/>
    </location>
    <ligand>
        <name>Mn(2+)</name>
        <dbReference type="ChEBI" id="CHEBI:29035"/>
        <label>2</label>
    </ligand>
</feature>
<feature type="binding site" evidence="1">
    <location>
        <position position="280"/>
    </location>
    <ligand>
        <name>Mn(2+)</name>
        <dbReference type="ChEBI" id="CHEBI:29035"/>
        <label>2</label>
    </ligand>
</feature>
<feature type="binding site" evidence="1">
    <location>
        <position position="339"/>
    </location>
    <ligand>
        <name>Mn(2+)</name>
        <dbReference type="ChEBI" id="CHEBI:29035"/>
        <label>1</label>
    </ligand>
</feature>
<feature type="binding site" evidence="1">
    <location>
        <position position="341"/>
    </location>
    <ligand>
        <name>Mn(2+)</name>
        <dbReference type="ChEBI" id="CHEBI:29035"/>
        <label>1</label>
    </ligand>
</feature>
<feature type="binding site" evidence="1">
    <location>
        <position position="341"/>
    </location>
    <ligand>
        <name>Mn(2+)</name>
        <dbReference type="ChEBI" id="CHEBI:29035"/>
        <label>2</label>
    </ligand>
</feature>
<dbReference type="EC" id="3.4.11.1" evidence="1"/>
<dbReference type="EC" id="3.4.11.10" evidence="1"/>
<dbReference type="EMBL" id="AP008231">
    <property type="protein sequence ID" value="BAD78550.1"/>
    <property type="molecule type" value="Genomic_DNA"/>
</dbReference>
<dbReference type="RefSeq" id="WP_011242673.1">
    <property type="nucleotide sequence ID" value="NC_006576.1"/>
</dbReference>
<dbReference type="SMR" id="Q5N569"/>
<dbReference type="MEROPS" id="M17.A01"/>
<dbReference type="KEGG" id="syc:syc0360_d"/>
<dbReference type="eggNOG" id="COG0260">
    <property type="taxonomic scope" value="Bacteria"/>
</dbReference>
<dbReference type="Proteomes" id="UP000001175">
    <property type="component" value="Chromosome"/>
</dbReference>
<dbReference type="GO" id="GO:0005737">
    <property type="term" value="C:cytoplasm"/>
    <property type="evidence" value="ECO:0007669"/>
    <property type="project" value="UniProtKB-SubCell"/>
</dbReference>
<dbReference type="GO" id="GO:0030145">
    <property type="term" value="F:manganese ion binding"/>
    <property type="evidence" value="ECO:0007669"/>
    <property type="project" value="UniProtKB-UniRule"/>
</dbReference>
<dbReference type="GO" id="GO:0070006">
    <property type="term" value="F:metalloaminopeptidase activity"/>
    <property type="evidence" value="ECO:0007669"/>
    <property type="project" value="InterPro"/>
</dbReference>
<dbReference type="GO" id="GO:0006508">
    <property type="term" value="P:proteolysis"/>
    <property type="evidence" value="ECO:0007669"/>
    <property type="project" value="UniProtKB-KW"/>
</dbReference>
<dbReference type="CDD" id="cd00433">
    <property type="entry name" value="Peptidase_M17"/>
    <property type="match status" value="1"/>
</dbReference>
<dbReference type="Gene3D" id="3.40.220.10">
    <property type="entry name" value="Leucine Aminopeptidase, subunit E, domain 1"/>
    <property type="match status" value="1"/>
</dbReference>
<dbReference type="Gene3D" id="3.40.630.10">
    <property type="entry name" value="Zn peptidases"/>
    <property type="match status" value="1"/>
</dbReference>
<dbReference type="HAMAP" id="MF_00181">
    <property type="entry name" value="Cytosol_peptidase_M17"/>
    <property type="match status" value="1"/>
</dbReference>
<dbReference type="InterPro" id="IPR011356">
    <property type="entry name" value="Leucine_aapep/pepB"/>
</dbReference>
<dbReference type="InterPro" id="IPR043472">
    <property type="entry name" value="Macro_dom-like"/>
</dbReference>
<dbReference type="InterPro" id="IPR000819">
    <property type="entry name" value="Peptidase_M17_C"/>
</dbReference>
<dbReference type="InterPro" id="IPR023042">
    <property type="entry name" value="Peptidase_M17_leu_NH2_pept"/>
</dbReference>
<dbReference type="InterPro" id="IPR008283">
    <property type="entry name" value="Peptidase_M17_N"/>
</dbReference>
<dbReference type="NCBIfam" id="NF002076">
    <property type="entry name" value="PRK00913.2-3"/>
    <property type="match status" value="1"/>
</dbReference>
<dbReference type="PANTHER" id="PTHR11963:SF23">
    <property type="entry name" value="CYTOSOL AMINOPEPTIDASE"/>
    <property type="match status" value="1"/>
</dbReference>
<dbReference type="PANTHER" id="PTHR11963">
    <property type="entry name" value="LEUCINE AMINOPEPTIDASE-RELATED"/>
    <property type="match status" value="1"/>
</dbReference>
<dbReference type="Pfam" id="PF00883">
    <property type="entry name" value="Peptidase_M17"/>
    <property type="match status" value="1"/>
</dbReference>
<dbReference type="Pfam" id="PF02789">
    <property type="entry name" value="Peptidase_M17_N"/>
    <property type="match status" value="1"/>
</dbReference>
<dbReference type="PRINTS" id="PR00481">
    <property type="entry name" value="LAMNOPPTDASE"/>
</dbReference>
<dbReference type="SUPFAM" id="SSF52949">
    <property type="entry name" value="Macro domain-like"/>
    <property type="match status" value="1"/>
</dbReference>
<dbReference type="SUPFAM" id="SSF53187">
    <property type="entry name" value="Zn-dependent exopeptidases"/>
    <property type="match status" value="1"/>
</dbReference>
<dbReference type="PROSITE" id="PS00631">
    <property type="entry name" value="CYTOSOL_AP"/>
    <property type="match status" value="1"/>
</dbReference>
<keyword id="KW-0031">Aminopeptidase</keyword>
<keyword id="KW-0963">Cytoplasm</keyword>
<keyword id="KW-0378">Hydrolase</keyword>
<keyword id="KW-0464">Manganese</keyword>
<keyword id="KW-0479">Metal-binding</keyword>
<keyword id="KW-0645">Protease</keyword>
<evidence type="ECO:0000255" key="1">
    <source>
        <dbReference type="HAMAP-Rule" id="MF_00181"/>
    </source>
</evidence>
<protein>
    <recommendedName>
        <fullName evidence="1">Probable cytosol aminopeptidase</fullName>
        <ecNumber evidence="1">3.4.11.1</ecNumber>
    </recommendedName>
    <alternativeName>
        <fullName evidence="1">Leucine aminopeptidase</fullName>
        <shortName evidence="1">LAP</shortName>
        <ecNumber evidence="1">3.4.11.10</ecNumber>
    </alternativeName>
    <alternativeName>
        <fullName evidence="1">Leucyl aminopeptidase</fullName>
    </alternativeName>
</protein>
<comment type="function">
    <text evidence="1">Presumably involved in the processing and regular turnover of intracellular proteins. Catalyzes the removal of unsubstituted N-terminal amino acids from various peptides.</text>
</comment>
<comment type="catalytic activity">
    <reaction evidence="1">
        <text>Release of an N-terminal amino acid, Xaa-|-Yaa-, in which Xaa is preferably Leu, but may be other amino acids including Pro although not Arg or Lys, and Yaa may be Pro. Amino acid amides and methyl esters are also readily hydrolyzed, but rates on arylamides are exceedingly low.</text>
        <dbReference type="EC" id="3.4.11.1"/>
    </reaction>
</comment>
<comment type="catalytic activity">
    <reaction evidence="1">
        <text>Release of an N-terminal amino acid, preferentially leucine, but not glutamic or aspartic acids.</text>
        <dbReference type="EC" id="3.4.11.10"/>
    </reaction>
</comment>
<comment type="cofactor">
    <cofactor evidence="1">
        <name>Mn(2+)</name>
        <dbReference type="ChEBI" id="CHEBI:29035"/>
    </cofactor>
    <text evidence="1">Binds 2 manganese ions per subunit.</text>
</comment>
<comment type="subcellular location">
    <subcellularLocation>
        <location evidence="1">Cytoplasm</location>
    </subcellularLocation>
</comment>
<comment type="similarity">
    <text evidence="1">Belongs to the peptidase M17 family.</text>
</comment>
<sequence>MTFQAIATHPQDWTGDTLALGLTTAAIGETLSSELQKLDQQWNGVLQELISDSEFKAKLAETTTTRIGGSIRKLILVGLGESPTTEDYRRAAAAVAKQARSFKSQTLAIAFPPSDDPAAIASAIVEGISLALYKDQRFKSEPDTASGPSSIELLGLAGQEAAIARAEQVVAGVELARQLVAAPANVVTPVTMADTAQELAAELGLELEILEADECEKRGMGAVLGVAKASDLPPKFIHLTYRPESTPRRKLAIVGKGLTFDSGGYNIKGAGSGIEMMKTDMGGAAATLGAAKAIGLIKPDVEVHFISPVTENMISGRGMHPGDILTASNGKTIEVNNTDAEGRLTLADALVFADGLGVDAIVDLATLTGACIIALGDDIAGLWSPSDDLAEQLLQAGKAAGEKLWRLPLEEPYLDGLKSPVADYKNTGPRAGGSITAALFLKQFVKHPVWAHLDVAGPVWSDKEKHYNPAGATGYGVRTLVNWVLS</sequence>
<reference key="1">
    <citation type="journal article" date="2007" name="Photosyn. Res.">
        <title>Complete nucleotide sequence of the freshwater unicellular cyanobacterium Synechococcus elongatus PCC 6301 chromosome: gene content and organization.</title>
        <authorList>
            <person name="Sugita C."/>
            <person name="Ogata K."/>
            <person name="Shikata M."/>
            <person name="Jikuya H."/>
            <person name="Takano J."/>
            <person name="Furumichi M."/>
            <person name="Kanehisa M."/>
            <person name="Omata T."/>
            <person name="Sugiura M."/>
            <person name="Sugita M."/>
        </authorList>
    </citation>
    <scope>NUCLEOTIDE SEQUENCE [LARGE SCALE GENOMIC DNA]</scope>
    <source>
        <strain>ATCC 27144 / PCC 6301 / SAUG 1402/1</strain>
    </source>
</reference>
<gene>
    <name evidence="1" type="primary">pepA</name>
    <name type="ordered locus">syc0360_d</name>
</gene>
<name>AMPA_SYNP6</name>
<proteinExistence type="inferred from homology"/>